<proteinExistence type="evidence at transcript level"/>
<comment type="function">
    <text evidence="1 5 6">Catalyzes the deubiquitination of SPDL1 (By similarity). Plays a role in the repair of UV-induced DNA damage via deubiquitination of ERCC1, promoting its recruitment to DNA damage sites (By similarity). May be involved in the maintenance of photoreceptor function (PubMed:30573563). May play a role in normal retinal development (PubMed:27613029).</text>
</comment>
<comment type="catalytic activity">
    <reaction evidence="1">
        <text>Thiol-dependent hydrolysis of ester, thioester, amide, peptide and isopeptide bonds formed by the C-terminal Gly of ubiquitin (a 76-residue protein attached to proteins as an intracellular targeting signal).</text>
        <dbReference type="EC" id="3.4.19.12"/>
    </reaction>
</comment>
<comment type="subcellular location">
    <subcellularLocation>
        <location evidence="6">Photoreceptor inner segment</location>
    </subcellularLocation>
    <subcellularLocation>
        <location evidence="1">Cytoplasm</location>
    </subcellularLocation>
    <subcellularLocation>
        <location evidence="1">Nucleus</location>
    </subcellularLocation>
</comment>
<comment type="tissue specificity">
    <text evidence="5">Retina.</text>
</comment>
<comment type="disruption phenotype">
    <text evidence="5 6">Morpholino-treated larvae show a reduction in eye size and significantly fewers green cone photoreceptors compared to the wild-type (PubMed:30573563). Moderate to severe eye morphological defects, with a defective formation of the retinal structures (PubMed:27613029).</text>
</comment>
<comment type="similarity">
    <text evidence="3">Belongs to the peptidase C19 family.</text>
</comment>
<reference key="1">
    <citation type="journal article" date="2013" name="Nature">
        <title>The zebrafish reference genome sequence and its relationship to the human genome.</title>
        <authorList>
            <person name="Howe K."/>
            <person name="Clark M.D."/>
            <person name="Torroja C.F."/>
            <person name="Torrance J."/>
            <person name="Berthelot C."/>
            <person name="Muffato M."/>
            <person name="Collins J.E."/>
            <person name="Humphray S."/>
            <person name="McLaren K."/>
            <person name="Matthews L."/>
            <person name="McLaren S."/>
            <person name="Sealy I."/>
            <person name="Caccamo M."/>
            <person name="Churcher C."/>
            <person name="Scott C."/>
            <person name="Barrett J.C."/>
            <person name="Koch R."/>
            <person name="Rauch G.J."/>
            <person name="White S."/>
            <person name="Chow W."/>
            <person name="Kilian B."/>
            <person name="Quintais L.T."/>
            <person name="Guerra-Assuncao J.A."/>
            <person name="Zhou Y."/>
            <person name="Gu Y."/>
            <person name="Yen J."/>
            <person name="Vogel J.H."/>
            <person name="Eyre T."/>
            <person name="Redmond S."/>
            <person name="Banerjee R."/>
            <person name="Chi J."/>
            <person name="Fu B."/>
            <person name="Langley E."/>
            <person name="Maguire S.F."/>
            <person name="Laird G.K."/>
            <person name="Lloyd D."/>
            <person name="Kenyon E."/>
            <person name="Donaldson S."/>
            <person name="Sehra H."/>
            <person name="Almeida-King J."/>
            <person name="Loveland J."/>
            <person name="Trevanion S."/>
            <person name="Jones M."/>
            <person name="Quail M."/>
            <person name="Willey D."/>
            <person name="Hunt A."/>
            <person name="Burton J."/>
            <person name="Sims S."/>
            <person name="McLay K."/>
            <person name="Plumb B."/>
            <person name="Davis J."/>
            <person name="Clee C."/>
            <person name="Oliver K."/>
            <person name="Clark R."/>
            <person name="Riddle C."/>
            <person name="Elliot D."/>
            <person name="Threadgold G."/>
            <person name="Harden G."/>
            <person name="Ware D."/>
            <person name="Begum S."/>
            <person name="Mortimore B."/>
            <person name="Kerry G."/>
            <person name="Heath P."/>
            <person name="Phillimore B."/>
            <person name="Tracey A."/>
            <person name="Corby N."/>
            <person name="Dunn M."/>
            <person name="Johnson C."/>
            <person name="Wood J."/>
            <person name="Clark S."/>
            <person name="Pelan S."/>
            <person name="Griffiths G."/>
            <person name="Smith M."/>
            <person name="Glithero R."/>
            <person name="Howden P."/>
            <person name="Barker N."/>
            <person name="Lloyd C."/>
            <person name="Stevens C."/>
            <person name="Harley J."/>
            <person name="Holt K."/>
            <person name="Panagiotidis G."/>
            <person name="Lovell J."/>
            <person name="Beasley H."/>
            <person name="Henderson C."/>
            <person name="Gordon D."/>
            <person name="Auger K."/>
            <person name="Wright D."/>
            <person name="Collins J."/>
            <person name="Raisen C."/>
            <person name="Dyer L."/>
            <person name="Leung K."/>
            <person name="Robertson L."/>
            <person name="Ambridge K."/>
            <person name="Leongamornlert D."/>
            <person name="McGuire S."/>
            <person name="Gilderthorp R."/>
            <person name="Griffiths C."/>
            <person name="Manthravadi D."/>
            <person name="Nichol S."/>
            <person name="Barker G."/>
            <person name="Whitehead S."/>
            <person name="Kay M."/>
            <person name="Brown J."/>
            <person name="Murnane C."/>
            <person name="Gray E."/>
            <person name="Humphries M."/>
            <person name="Sycamore N."/>
            <person name="Barker D."/>
            <person name="Saunders D."/>
            <person name="Wallis J."/>
            <person name="Babbage A."/>
            <person name="Hammond S."/>
            <person name="Mashreghi-Mohammadi M."/>
            <person name="Barr L."/>
            <person name="Martin S."/>
            <person name="Wray P."/>
            <person name="Ellington A."/>
            <person name="Matthews N."/>
            <person name="Ellwood M."/>
            <person name="Woodmansey R."/>
            <person name="Clark G."/>
            <person name="Cooper J."/>
            <person name="Tromans A."/>
            <person name="Grafham D."/>
            <person name="Skuce C."/>
            <person name="Pandian R."/>
            <person name="Andrews R."/>
            <person name="Harrison E."/>
            <person name="Kimberley A."/>
            <person name="Garnett J."/>
            <person name="Fosker N."/>
            <person name="Hall R."/>
            <person name="Garner P."/>
            <person name="Kelly D."/>
            <person name="Bird C."/>
            <person name="Palmer S."/>
            <person name="Gehring I."/>
            <person name="Berger A."/>
            <person name="Dooley C.M."/>
            <person name="Ersan-Urun Z."/>
            <person name="Eser C."/>
            <person name="Geiger H."/>
            <person name="Geisler M."/>
            <person name="Karotki L."/>
            <person name="Kirn A."/>
            <person name="Konantz J."/>
            <person name="Konantz M."/>
            <person name="Oberlander M."/>
            <person name="Rudolph-Geiger S."/>
            <person name="Teucke M."/>
            <person name="Lanz C."/>
            <person name="Raddatz G."/>
            <person name="Osoegawa K."/>
            <person name="Zhu B."/>
            <person name="Rapp A."/>
            <person name="Widaa S."/>
            <person name="Langford C."/>
            <person name="Yang F."/>
            <person name="Schuster S.C."/>
            <person name="Carter N.P."/>
            <person name="Harrow J."/>
            <person name="Ning Z."/>
            <person name="Herrero J."/>
            <person name="Searle S.M."/>
            <person name="Enright A."/>
            <person name="Geisler R."/>
            <person name="Plasterk R.H."/>
            <person name="Lee C."/>
            <person name="Westerfield M."/>
            <person name="de Jong P.J."/>
            <person name="Zon L.I."/>
            <person name="Postlethwait J.H."/>
            <person name="Nusslein-Volhard C."/>
            <person name="Hubbard T.J."/>
            <person name="Roest Crollius H."/>
            <person name="Rogers J."/>
            <person name="Stemple D.L."/>
        </authorList>
    </citation>
    <scope>NUCLEOTIDE SEQUENCE [LARGE SCALE GENOMIC DNA]</scope>
    <source>
        <strain>Tuebingen</strain>
    </source>
</reference>
<reference key="2">
    <citation type="journal article" date="2016" name="Methods Mol. Biol.">
        <title>Combining Zebrafish and Mouse Models to Test the Function of Deubiquitinating Enzyme (Dubs) Genes in Development: Role of USP45 in the Retina.</title>
        <authorList>
            <person name="Toulis V."/>
            <person name="Garanto A."/>
            <person name="Marfany G."/>
        </authorList>
    </citation>
    <scope>FUNCTION</scope>
    <scope>DISRUPTION PHENOTYPE</scope>
    <scope>TISSUE SPECIFICITY</scope>
</reference>
<reference key="3">
    <citation type="journal article" date="2019" name="J. Med. Genet.">
        <title>Biallelic mutations in USP45, encoding a deubiquitinating enzyme, are associated with Leber congenital amaurosis.</title>
        <authorList>
            <person name="Yi Z."/>
            <person name="Ouyang J."/>
            <person name="Sun W."/>
            <person name="Xiao X."/>
            <person name="Li S."/>
            <person name="Jia X."/>
            <person name="Wang P."/>
            <person name="Zhang Q."/>
        </authorList>
    </citation>
    <scope>FUNCTION</scope>
    <scope>SUBCELLULAR LOCATION</scope>
    <scope>DISRUPTION PHENOTYPE</scope>
</reference>
<evidence type="ECO:0000250" key="1">
    <source>
        <dbReference type="UniProtKB" id="Q70EL2"/>
    </source>
</evidence>
<evidence type="ECO:0000255" key="2">
    <source>
        <dbReference type="PROSITE-ProRule" id="PRU00502"/>
    </source>
</evidence>
<evidence type="ECO:0000255" key="3">
    <source>
        <dbReference type="PROSITE-ProRule" id="PRU01035"/>
    </source>
</evidence>
<evidence type="ECO:0000256" key="4">
    <source>
        <dbReference type="SAM" id="MobiDB-lite"/>
    </source>
</evidence>
<evidence type="ECO:0000269" key="5">
    <source>
    </source>
</evidence>
<evidence type="ECO:0000269" key="6">
    <source>
    </source>
</evidence>
<evidence type="ECO:0000312" key="7">
    <source>
        <dbReference type="ZFIN" id="ZDB-GENE-100211-2"/>
    </source>
</evidence>
<protein>
    <recommendedName>
        <fullName>Ubiquitin carboxyl-terminal hydrolase 45</fullName>
        <ecNumber evidence="1">3.4.19.12</ecNumber>
    </recommendedName>
    <alternativeName>
        <fullName evidence="7">Ubiquitin specific peptidase 45</fullName>
    </alternativeName>
</protein>
<name>UBP45_DANRE</name>
<sequence length="803" mass="89221">MRLKDPFSLKTADMTKRSNKPKKPRDEDSSDEVGGLTCQHVSRAVDLSSVKKAVTGSLWSVCSDCLKERNVLEGETAGAHDILVCLKCGFQGCNQAEVQHSTKHQQAHHSDSHCITISLTTWKAWCFECKEELSTHCNKKALAQTLDFLQKQSAKATSGTSSKLIKLREEPAEYVDTQRGKSPVNSTLIPVKGINNLGNTCFFNAVMQNLSQTHMLNDLIQDVKEKGHKMKISPSTETNLGSLTVTLPSPEPLTSAMFLFLQSMKESGKGPVSPKILFNQLCQKAPRFKGYQQQDSQELLHYLLDSMRVEETKRIKAGILKAFNNPTEKTADEETKRQVKAYGKEGVKLNFVDRIFVGELTSTIMCEECEHISTVKEAFIDISLPIIEERISKPTNPARLGKSGREQDSLTSHDDSLAAHSQANRNSRRLSGQKLQSRHSSTSHDDRGPDTVSSRQEEDLCVAGRGLSSYRTDTMGSQSDCSEKESNLQDSSNDADSEASESEWSPRIPSVSSHSSTSDKTSITTTLSTTTHNPSLKSNPSSTPLPSIRPQQGGAVEQLVSAVSKLGLVHTSTDTLPISHSQEELSETRDRDRQHHQGAFQVLCHSYTPSSKECSVQSCLHQFTSIELLMGNNKLLCENCTDRRQRQMKRSDKKAEKVYTSARKQMLISALPPVVTLHLKRFHQAGMNLRKVNRHVDFPLLLDLAPFCSATCKNLGSGERVLYSLYGIVEHSGSMRGGHYAAYVKVRTPQRKPEQRRNQSGSREACSAPQGQWVYVSDTTVQTVPESRVLNSQAYLLFYEELL</sequence>
<feature type="chain" id="PRO_0000448944" description="Ubiquitin carboxyl-terminal hydrolase 45">
    <location>
        <begin position="1"/>
        <end position="803"/>
    </location>
</feature>
<feature type="domain" description="USP" evidence="3">
    <location>
        <begin position="192"/>
        <end position="802"/>
    </location>
</feature>
<feature type="zinc finger region" description="UBP-type" evidence="2">
    <location>
        <begin position="36"/>
        <end position="153"/>
    </location>
</feature>
<feature type="region of interest" description="Disordered" evidence="4">
    <location>
        <begin position="1"/>
        <end position="34"/>
    </location>
</feature>
<feature type="region of interest" description="Disordered" evidence="4">
    <location>
        <begin position="394"/>
        <end position="554"/>
    </location>
</feature>
<feature type="compositionally biased region" description="Basic and acidic residues" evidence="4">
    <location>
        <begin position="403"/>
        <end position="417"/>
    </location>
</feature>
<feature type="compositionally biased region" description="Polar residues" evidence="4">
    <location>
        <begin position="419"/>
        <end position="440"/>
    </location>
</feature>
<feature type="compositionally biased region" description="Polar residues" evidence="4">
    <location>
        <begin position="469"/>
        <end position="480"/>
    </location>
</feature>
<feature type="compositionally biased region" description="Low complexity" evidence="4">
    <location>
        <begin position="502"/>
        <end position="531"/>
    </location>
</feature>
<feature type="compositionally biased region" description="Polar residues" evidence="4">
    <location>
        <begin position="532"/>
        <end position="545"/>
    </location>
</feature>
<feature type="active site" description="Nucleophile" evidence="3">
    <location>
        <position position="201"/>
    </location>
</feature>
<feature type="active site" description="Proton acceptor" evidence="3">
    <location>
        <position position="739"/>
    </location>
</feature>
<feature type="binding site" evidence="2">
    <location>
        <position position="38"/>
    </location>
    <ligand>
        <name>Zn(2+)</name>
        <dbReference type="ChEBI" id="CHEBI:29105"/>
        <label>1</label>
    </ligand>
</feature>
<feature type="binding site" evidence="2">
    <location>
        <position position="40"/>
    </location>
    <ligand>
        <name>Zn(2+)</name>
        <dbReference type="ChEBI" id="CHEBI:29105"/>
        <label>1</label>
    </ligand>
</feature>
<feature type="binding site" evidence="2">
    <location>
        <position position="62"/>
    </location>
    <ligand>
        <name>Zn(2+)</name>
        <dbReference type="ChEBI" id="CHEBI:29105"/>
        <label>2</label>
    </ligand>
</feature>
<feature type="binding site" evidence="2">
    <location>
        <position position="65"/>
    </location>
    <ligand>
        <name>Zn(2+)</name>
        <dbReference type="ChEBI" id="CHEBI:29105"/>
        <label>2</label>
    </ligand>
</feature>
<feature type="binding site" evidence="2">
    <location>
        <position position="85"/>
    </location>
    <ligand>
        <name>Zn(2+)</name>
        <dbReference type="ChEBI" id="CHEBI:29105"/>
        <label>3</label>
    </ligand>
</feature>
<feature type="binding site" evidence="2">
    <location>
        <position position="88"/>
    </location>
    <ligand>
        <name>Zn(2+)</name>
        <dbReference type="ChEBI" id="CHEBI:29105"/>
        <label>3</label>
    </ligand>
</feature>
<feature type="binding site" evidence="2">
    <location>
        <position position="93"/>
    </location>
    <ligand>
        <name>Zn(2+)</name>
        <dbReference type="ChEBI" id="CHEBI:29105"/>
        <label>2</label>
    </ligand>
</feature>
<feature type="binding site" evidence="2">
    <location>
        <position position="100"/>
    </location>
    <ligand>
        <name>Zn(2+)</name>
        <dbReference type="ChEBI" id="CHEBI:29105"/>
        <label>2</label>
    </ligand>
</feature>
<feature type="binding site" evidence="2">
    <location>
        <position position="104"/>
    </location>
    <ligand>
        <name>Zn(2+)</name>
        <dbReference type="ChEBI" id="CHEBI:29105"/>
        <label>3</label>
    </ligand>
</feature>
<feature type="binding site" evidence="2">
    <location>
        <position position="113"/>
    </location>
    <ligand>
        <name>Zn(2+)</name>
        <dbReference type="ChEBI" id="CHEBI:29105"/>
        <label>3</label>
    </ligand>
</feature>
<feature type="binding site" evidence="2">
    <location>
        <position position="126"/>
    </location>
    <ligand>
        <name>Zn(2+)</name>
        <dbReference type="ChEBI" id="CHEBI:29105"/>
        <label>1</label>
    </ligand>
</feature>
<feature type="binding site" evidence="2">
    <location>
        <position position="129"/>
    </location>
    <ligand>
        <name>Zn(2+)</name>
        <dbReference type="ChEBI" id="CHEBI:29105"/>
        <label>1</label>
    </ligand>
</feature>
<dbReference type="EC" id="3.4.19.12" evidence="1"/>
<dbReference type="EMBL" id="CR848729">
    <property type="status" value="NOT_ANNOTATED_CDS"/>
    <property type="molecule type" value="Genomic_DNA"/>
</dbReference>
<dbReference type="EMBL" id="CR848819">
    <property type="status" value="NOT_ANNOTATED_CDS"/>
    <property type="molecule type" value="Genomic_DNA"/>
</dbReference>
<dbReference type="RefSeq" id="NP_001410895.1">
    <property type="nucleotide sequence ID" value="NM_001423966.1"/>
</dbReference>
<dbReference type="RefSeq" id="XP_005158432.1">
    <property type="nucleotide sequence ID" value="XM_005158375.3"/>
</dbReference>
<dbReference type="SMR" id="E9QG68"/>
<dbReference type="FunCoup" id="E9QG68">
    <property type="interactions" value="1566"/>
</dbReference>
<dbReference type="STRING" id="7955.ENSDARP00000118184"/>
<dbReference type="Ensembl" id="ENSDART00000137232">
    <property type="protein sequence ID" value="ENSDARP00000118184"/>
    <property type="gene ID" value="ENSDARG00000075013"/>
</dbReference>
<dbReference type="GeneID" id="564004"/>
<dbReference type="AGR" id="ZFIN:ZDB-GENE-100211-2"/>
<dbReference type="ZFIN" id="ZDB-GENE-100211-2">
    <property type="gene designation" value="usp45"/>
</dbReference>
<dbReference type="HOGENOM" id="CLU_007938_1_0_1"/>
<dbReference type="InParanoid" id="E9QG68"/>
<dbReference type="OMA" id="AVGQWVY"/>
<dbReference type="OrthoDB" id="2020758at2759"/>
<dbReference type="PhylomeDB" id="E9QG68"/>
<dbReference type="Reactome" id="R-DRE-5696395">
    <property type="pathway name" value="Formation of Incision Complex in GG-NER"/>
</dbReference>
<dbReference type="PRO" id="PR:E9QG68"/>
<dbReference type="Proteomes" id="UP000000437">
    <property type="component" value="Alternate scaffold 16"/>
</dbReference>
<dbReference type="Proteomes" id="UP000000437">
    <property type="component" value="Chromosome 16"/>
</dbReference>
<dbReference type="Bgee" id="ENSDARG00000075013">
    <property type="expression patterns" value="Expressed in early embryo and 21 other cell types or tissues"/>
</dbReference>
<dbReference type="GO" id="GO:0005737">
    <property type="term" value="C:cytoplasm"/>
    <property type="evidence" value="ECO:0007669"/>
    <property type="project" value="UniProtKB-SubCell"/>
</dbReference>
<dbReference type="GO" id="GO:0005634">
    <property type="term" value="C:nucleus"/>
    <property type="evidence" value="ECO:0007669"/>
    <property type="project" value="UniProtKB-SubCell"/>
</dbReference>
<dbReference type="GO" id="GO:0001917">
    <property type="term" value="C:photoreceptor inner segment"/>
    <property type="evidence" value="ECO:0000314"/>
    <property type="project" value="UniProtKB"/>
</dbReference>
<dbReference type="GO" id="GO:0004843">
    <property type="term" value="F:cysteine-type deubiquitinase activity"/>
    <property type="evidence" value="ECO:0000250"/>
    <property type="project" value="UniProtKB"/>
</dbReference>
<dbReference type="GO" id="GO:0008270">
    <property type="term" value="F:zinc ion binding"/>
    <property type="evidence" value="ECO:0007669"/>
    <property type="project" value="UniProtKB-KW"/>
</dbReference>
<dbReference type="GO" id="GO:0016477">
    <property type="term" value="P:cell migration"/>
    <property type="evidence" value="ECO:0000250"/>
    <property type="project" value="UniProtKB"/>
</dbReference>
<dbReference type="GO" id="GO:0003407">
    <property type="term" value="P:neural retina development"/>
    <property type="evidence" value="ECO:0000315"/>
    <property type="project" value="UniProtKB"/>
</dbReference>
<dbReference type="GO" id="GO:0045494">
    <property type="term" value="P:photoreceptor cell maintenance"/>
    <property type="evidence" value="ECO:0000315"/>
    <property type="project" value="UniProtKB"/>
</dbReference>
<dbReference type="GO" id="GO:0016579">
    <property type="term" value="P:protein deubiquitination"/>
    <property type="evidence" value="ECO:0007669"/>
    <property type="project" value="InterPro"/>
</dbReference>
<dbReference type="GO" id="GO:0006508">
    <property type="term" value="P:proteolysis"/>
    <property type="evidence" value="ECO:0007669"/>
    <property type="project" value="UniProtKB-KW"/>
</dbReference>
<dbReference type="CDD" id="cd02667">
    <property type="entry name" value="Peptidase_C19K"/>
    <property type="match status" value="1"/>
</dbReference>
<dbReference type="FunFam" id="3.90.70.10:FF:000102">
    <property type="entry name" value="Ubiquitinyl hydrolase 1"/>
    <property type="match status" value="1"/>
</dbReference>
<dbReference type="FunFam" id="3.90.70.10:FF:000129">
    <property type="entry name" value="Ubiquitinyl hydrolase 1"/>
    <property type="match status" value="1"/>
</dbReference>
<dbReference type="Gene3D" id="3.90.70.10">
    <property type="entry name" value="Cysteine proteinases"/>
    <property type="match status" value="2"/>
</dbReference>
<dbReference type="Gene3D" id="3.30.40.10">
    <property type="entry name" value="Zinc/RING finger domain, C3HC4 (zinc finger)"/>
    <property type="match status" value="1"/>
</dbReference>
<dbReference type="InterPro" id="IPR038765">
    <property type="entry name" value="Papain-like_cys_pep_sf"/>
</dbReference>
<dbReference type="InterPro" id="IPR050164">
    <property type="entry name" value="Peptidase_C19"/>
</dbReference>
<dbReference type="InterPro" id="IPR001394">
    <property type="entry name" value="Peptidase_C19_UCH"/>
</dbReference>
<dbReference type="InterPro" id="IPR018200">
    <property type="entry name" value="USP_CS"/>
</dbReference>
<dbReference type="InterPro" id="IPR028889">
    <property type="entry name" value="USP_dom"/>
</dbReference>
<dbReference type="InterPro" id="IPR013083">
    <property type="entry name" value="Znf_RING/FYVE/PHD"/>
</dbReference>
<dbReference type="InterPro" id="IPR001607">
    <property type="entry name" value="Znf_UBP"/>
</dbReference>
<dbReference type="PANTHER" id="PTHR24006">
    <property type="entry name" value="UBIQUITIN CARBOXYL-TERMINAL HYDROLASE"/>
    <property type="match status" value="1"/>
</dbReference>
<dbReference type="PANTHER" id="PTHR24006:SF858">
    <property type="entry name" value="UBIQUITIN CARBOXYL-TERMINAL HYDROLASE"/>
    <property type="match status" value="1"/>
</dbReference>
<dbReference type="Pfam" id="PF00443">
    <property type="entry name" value="UCH"/>
    <property type="match status" value="1"/>
</dbReference>
<dbReference type="Pfam" id="PF02148">
    <property type="entry name" value="zf-UBP"/>
    <property type="match status" value="1"/>
</dbReference>
<dbReference type="SUPFAM" id="SSF54001">
    <property type="entry name" value="Cysteine proteinases"/>
    <property type="match status" value="1"/>
</dbReference>
<dbReference type="SUPFAM" id="SSF57850">
    <property type="entry name" value="RING/U-box"/>
    <property type="match status" value="1"/>
</dbReference>
<dbReference type="PROSITE" id="PS00972">
    <property type="entry name" value="USP_1"/>
    <property type="match status" value="1"/>
</dbReference>
<dbReference type="PROSITE" id="PS00973">
    <property type="entry name" value="USP_2"/>
    <property type="match status" value="1"/>
</dbReference>
<dbReference type="PROSITE" id="PS50235">
    <property type="entry name" value="USP_3"/>
    <property type="match status" value="1"/>
</dbReference>
<dbReference type="PROSITE" id="PS50271">
    <property type="entry name" value="ZF_UBP"/>
    <property type="match status" value="1"/>
</dbReference>
<accession>E9QG68</accession>
<keyword id="KW-0963">Cytoplasm</keyword>
<keyword id="KW-0378">Hydrolase</keyword>
<keyword id="KW-0479">Metal-binding</keyword>
<keyword id="KW-0539">Nucleus</keyword>
<keyword id="KW-0645">Protease</keyword>
<keyword id="KW-1185">Reference proteome</keyword>
<keyword id="KW-0788">Thiol protease</keyword>
<keyword id="KW-0833">Ubl conjugation pathway</keyword>
<keyword id="KW-0862">Zinc</keyword>
<keyword id="KW-0863">Zinc-finger</keyword>
<gene>
    <name evidence="7" type="primary">usp45</name>
</gene>
<organism>
    <name type="scientific">Danio rerio</name>
    <name type="common">Zebrafish</name>
    <name type="synonym">Brachydanio rerio</name>
    <dbReference type="NCBI Taxonomy" id="7955"/>
    <lineage>
        <taxon>Eukaryota</taxon>
        <taxon>Metazoa</taxon>
        <taxon>Chordata</taxon>
        <taxon>Craniata</taxon>
        <taxon>Vertebrata</taxon>
        <taxon>Euteleostomi</taxon>
        <taxon>Actinopterygii</taxon>
        <taxon>Neopterygii</taxon>
        <taxon>Teleostei</taxon>
        <taxon>Ostariophysi</taxon>
        <taxon>Cypriniformes</taxon>
        <taxon>Danionidae</taxon>
        <taxon>Danioninae</taxon>
        <taxon>Danio</taxon>
    </lineage>
</organism>